<comment type="function">
    <text evidence="1">This protein binds specifically to 23S rRNA; its binding is stimulated by other ribosomal proteins, e.g. L4, L17, and L20. It is important during the early stages of 50S assembly. It makes multiple contacts with different domains of the 23S rRNA in the assembled 50S subunit and ribosome (By similarity).</text>
</comment>
<comment type="function">
    <text evidence="1">The globular domain of the protein is located near the polypeptide exit tunnel on the outside of the subunit, while an extended beta-hairpin is found that lines the wall of the exit tunnel in the center of the 70S ribosome.</text>
</comment>
<comment type="subunit">
    <text evidence="1">Part of the 50S ribosomal subunit.</text>
</comment>
<comment type="similarity">
    <text evidence="1">Belongs to the universal ribosomal protein uL22 family.</text>
</comment>
<organism>
    <name type="scientific">Helicobacter hepaticus (strain ATCC 51449 / 3B1)</name>
    <dbReference type="NCBI Taxonomy" id="235279"/>
    <lineage>
        <taxon>Bacteria</taxon>
        <taxon>Pseudomonadati</taxon>
        <taxon>Campylobacterota</taxon>
        <taxon>Epsilonproteobacteria</taxon>
        <taxon>Campylobacterales</taxon>
        <taxon>Helicobacteraceae</taxon>
        <taxon>Helicobacter</taxon>
    </lineage>
</organism>
<evidence type="ECO:0000255" key="1">
    <source>
        <dbReference type="HAMAP-Rule" id="MF_01331"/>
    </source>
</evidence>
<evidence type="ECO:0000256" key="2">
    <source>
        <dbReference type="SAM" id="MobiDB-lite"/>
    </source>
</evidence>
<evidence type="ECO:0000305" key="3"/>
<proteinExistence type="inferred from homology"/>
<sequence length="190" mass="20436">MSRALLKYIRLSPTKARLVARQVQGMNAEIAIASLEFTPNKAARVISKVIASAVANGGYDAQDVIILSCRVDAGPVLRRFMPRAKGRATPIRKPMAHILVEVGTQKSVQQSVQSTKAKAKGAKNIKSEDSKNSLKVTESKADSKVDAAQKASTTQEKAESKTKVAKAKVATTKSTATRKTTKKKTEGEEK</sequence>
<gene>
    <name evidence="1" type="primary">rplV</name>
    <name type="ordered locus">HH_1383</name>
</gene>
<feature type="chain" id="PRO_0000125162" description="Large ribosomal subunit protein uL22">
    <location>
        <begin position="1"/>
        <end position="190"/>
    </location>
</feature>
<feature type="region of interest" description="Disordered" evidence="2">
    <location>
        <begin position="111"/>
        <end position="190"/>
    </location>
</feature>
<feature type="compositionally biased region" description="Basic and acidic residues" evidence="2">
    <location>
        <begin position="125"/>
        <end position="147"/>
    </location>
</feature>
<feature type="compositionally biased region" description="Low complexity" evidence="2">
    <location>
        <begin position="167"/>
        <end position="178"/>
    </location>
</feature>
<keyword id="KW-1185">Reference proteome</keyword>
<keyword id="KW-0687">Ribonucleoprotein</keyword>
<keyword id="KW-0689">Ribosomal protein</keyword>
<keyword id="KW-0694">RNA-binding</keyword>
<keyword id="KW-0699">rRNA-binding</keyword>
<accession>Q7VGD9</accession>
<name>RL22_HELHP</name>
<dbReference type="EMBL" id="AE017125">
    <property type="protein sequence ID" value="AAP77980.1"/>
    <property type="molecule type" value="Genomic_DNA"/>
</dbReference>
<dbReference type="SMR" id="Q7VGD9"/>
<dbReference type="STRING" id="235279.HH_1383"/>
<dbReference type="KEGG" id="hhe:HH_1383"/>
<dbReference type="eggNOG" id="COG0091">
    <property type="taxonomic scope" value="Bacteria"/>
</dbReference>
<dbReference type="HOGENOM" id="CLU_083987_2_0_7"/>
<dbReference type="OrthoDB" id="9805969at2"/>
<dbReference type="Proteomes" id="UP000002495">
    <property type="component" value="Chromosome"/>
</dbReference>
<dbReference type="GO" id="GO:0022625">
    <property type="term" value="C:cytosolic large ribosomal subunit"/>
    <property type="evidence" value="ECO:0007669"/>
    <property type="project" value="TreeGrafter"/>
</dbReference>
<dbReference type="GO" id="GO:0019843">
    <property type="term" value="F:rRNA binding"/>
    <property type="evidence" value="ECO:0007669"/>
    <property type="project" value="UniProtKB-UniRule"/>
</dbReference>
<dbReference type="GO" id="GO:0003735">
    <property type="term" value="F:structural constituent of ribosome"/>
    <property type="evidence" value="ECO:0007669"/>
    <property type="project" value="InterPro"/>
</dbReference>
<dbReference type="GO" id="GO:0006412">
    <property type="term" value="P:translation"/>
    <property type="evidence" value="ECO:0007669"/>
    <property type="project" value="UniProtKB-UniRule"/>
</dbReference>
<dbReference type="CDD" id="cd00336">
    <property type="entry name" value="Ribosomal_L22"/>
    <property type="match status" value="1"/>
</dbReference>
<dbReference type="Gene3D" id="3.90.470.10">
    <property type="entry name" value="Ribosomal protein L22/L17"/>
    <property type="match status" value="1"/>
</dbReference>
<dbReference type="HAMAP" id="MF_01331_B">
    <property type="entry name" value="Ribosomal_uL22_B"/>
    <property type="match status" value="1"/>
</dbReference>
<dbReference type="InterPro" id="IPR001063">
    <property type="entry name" value="Ribosomal_uL22"/>
</dbReference>
<dbReference type="InterPro" id="IPR005727">
    <property type="entry name" value="Ribosomal_uL22_bac/chlpt-type"/>
</dbReference>
<dbReference type="InterPro" id="IPR047867">
    <property type="entry name" value="Ribosomal_uL22_bac/org-type"/>
</dbReference>
<dbReference type="InterPro" id="IPR018260">
    <property type="entry name" value="Ribosomal_uL22_CS"/>
</dbReference>
<dbReference type="InterPro" id="IPR036394">
    <property type="entry name" value="Ribosomal_uL22_sf"/>
</dbReference>
<dbReference type="NCBIfam" id="TIGR01044">
    <property type="entry name" value="rplV_bact"/>
    <property type="match status" value="1"/>
</dbReference>
<dbReference type="PANTHER" id="PTHR13501">
    <property type="entry name" value="CHLOROPLAST 50S RIBOSOMAL PROTEIN L22-RELATED"/>
    <property type="match status" value="1"/>
</dbReference>
<dbReference type="PANTHER" id="PTHR13501:SF8">
    <property type="entry name" value="LARGE RIBOSOMAL SUBUNIT PROTEIN UL22M"/>
    <property type="match status" value="1"/>
</dbReference>
<dbReference type="Pfam" id="PF00237">
    <property type="entry name" value="Ribosomal_L22"/>
    <property type="match status" value="1"/>
</dbReference>
<dbReference type="SUPFAM" id="SSF54843">
    <property type="entry name" value="Ribosomal protein L22"/>
    <property type="match status" value="1"/>
</dbReference>
<dbReference type="PROSITE" id="PS00464">
    <property type="entry name" value="RIBOSOMAL_L22"/>
    <property type="match status" value="1"/>
</dbReference>
<protein>
    <recommendedName>
        <fullName evidence="1">Large ribosomal subunit protein uL22</fullName>
    </recommendedName>
    <alternativeName>
        <fullName evidence="3">50S ribosomal protein L22</fullName>
    </alternativeName>
</protein>
<reference key="1">
    <citation type="journal article" date="2003" name="Proc. Natl. Acad. Sci. U.S.A.">
        <title>The complete genome sequence of the carcinogenic bacterium Helicobacter hepaticus.</title>
        <authorList>
            <person name="Suerbaum S."/>
            <person name="Josenhans C."/>
            <person name="Sterzenbach T."/>
            <person name="Drescher B."/>
            <person name="Brandt P."/>
            <person name="Bell M."/>
            <person name="Droege M."/>
            <person name="Fartmann B."/>
            <person name="Fischer H.-P."/>
            <person name="Ge Z."/>
            <person name="Hoerster A."/>
            <person name="Holland R."/>
            <person name="Klein K."/>
            <person name="Koenig J."/>
            <person name="Macko L."/>
            <person name="Mendz G.L."/>
            <person name="Nyakatura G."/>
            <person name="Schauer D.B."/>
            <person name="Shen Z."/>
            <person name="Weber J."/>
            <person name="Frosch M."/>
            <person name="Fox J.G."/>
        </authorList>
    </citation>
    <scope>NUCLEOTIDE SEQUENCE [LARGE SCALE GENOMIC DNA]</scope>
    <source>
        <strain>ATCC 51449 / 3B1</strain>
    </source>
</reference>